<sequence length="273" mass="28753">MSAAPRIGILGAGGRMGRILIQAVQQAGYQLGAAVVRPESTLIGADAGELAGIGSIGVKLTGSLAEVLEDCDVVIDFSTPAATSEHLKLCREAGVAIVIGTTGMSDEQKAELDETAKHIPVVYAANYSVGVNVSIKLLELAAKVFGDTVDIEVIEAHHRHKVDAPSGTALMMGEAIADTLGRNLKEVAVYGREGHTGPRDRQTIGFETIRGGDIVGEHTVMFIGEGERVEVTHKATNRMNFAAGAVRAAAWVVGREARKYDMKDVLGLNDVQV</sequence>
<protein>
    <recommendedName>
        <fullName evidence="1">4-hydroxy-tetrahydrodipicolinate reductase</fullName>
        <shortName evidence="1">HTPA reductase</shortName>
        <ecNumber evidence="1">1.17.1.8</ecNumber>
    </recommendedName>
</protein>
<comment type="function">
    <text evidence="1">Catalyzes the conversion of 4-hydroxy-tetrahydrodipicolinate (HTPA) to tetrahydrodipicolinate.</text>
</comment>
<comment type="catalytic activity">
    <reaction evidence="1">
        <text>(S)-2,3,4,5-tetrahydrodipicolinate + NAD(+) + H2O = (2S,4S)-4-hydroxy-2,3,4,5-tetrahydrodipicolinate + NADH + H(+)</text>
        <dbReference type="Rhea" id="RHEA:35323"/>
        <dbReference type="ChEBI" id="CHEBI:15377"/>
        <dbReference type="ChEBI" id="CHEBI:15378"/>
        <dbReference type="ChEBI" id="CHEBI:16845"/>
        <dbReference type="ChEBI" id="CHEBI:57540"/>
        <dbReference type="ChEBI" id="CHEBI:57945"/>
        <dbReference type="ChEBI" id="CHEBI:67139"/>
        <dbReference type="EC" id="1.17.1.8"/>
    </reaction>
</comment>
<comment type="catalytic activity">
    <reaction evidence="1">
        <text>(S)-2,3,4,5-tetrahydrodipicolinate + NADP(+) + H2O = (2S,4S)-4-hydroxy-2,3,4,5-tetrahydrodipicolinate + NADPH + H(+)</text>
        <dbReference type="Rhea" id="RHEA:35331"/>
        <dbReference type="ChEBI" id="CHEBI:15377"/>
        <dbReference type="ChEBI" id="CHEBI:15378"/>
        <dbReference type="ChEBI" id="CHEBI:16845"/>
        <dbReference type="ChEBI" id="CHEBI:57783"/>
        <dbReference type="ChEBI" id="CHEBI:58349"/>
        <dbReference type="ChEBI" id="CHEBI:67139"/>
        <dbReference type="EC" id="1.17.1.8"/>
    </reaction>
</comment>
<comment type="pathway">
    <text evidence="1">Amino-acid biosynthesis; L-lysine biosynthesis via DAP pathway; (S)-tetrahydrodipicolinate from L-aspartate: step 4/4.</text>
</comment>
<comment type="subcellular location">
    <subcellularLocation>
        <location evidence="1">Cytoplasm</location>
    </subcellularLocation>
</comment>
<comment type="similarity">
    <text evidence="1">Belongs to the DapB family.</text>
</comment>
<comment type="caution">
    <text evidence="2">Was originally thought to be a dihydrodipicolinate reductase (DHDPR), catalyzing the conversion of dihydrodipicolinate to tetrahydrodipicolinate. However, it was shown in E.coli that the substrate of the enzymatic reaction is not dihydrodipicolinate (DHDP) but in fact (2S,4S)-4-hydroxy-2,3,4,5-tetrahydrodipicolinic acid (HTPA), the product released by the DapA-catalyzed reaction.</text>
</comment>
<proteinExistence type="inferred from homology"/>
<gene>
    <name evidence="1" type="primary">dapB</name>
    <name type="ordered locus">ABBFA_000038</name>
</gene>
<feature type="chain" id="PRO_1000117356" description="4-hydroxy-tetrahydrodipicolinate reductase">
    <location>
        <begin position="1"/>
        <end position="273"/>
    </location>
</feature>
<feature type="active site" description="Proton donor/acceptor" evidence="1">
    <location>
        <position position="157"/>
    </location>
</feature>
<feature type="active site" description="Proton donor" evidence="1">
    <location>
        <position position="161"/>
    </location>
</feature>
<feature type="binding site" evidence="1">
    <location>
        <begin position="11"/>
        <end position="16"/>
    </location>
    <ligand>
        <name>NAD(+)</name>
        <dbReference type="ChEBI" id="CHEBI:57540"/>
    </ligand>
</feature>
<feature type="binding site" evidence="1">
    <location>
        <position position="37"/>
    </location>
    <ligand>
        <name>NADP(+)</name>
        <dbReference type="ChEBI" id="CHEBI:58349"/>
    </ligand>
</feature>
<feature type="binding site" evidence="1">
    <location>
        <begin position="100"/>
        <end position="102"/>
    </location>
    <ligand>
        <name>NAD(+)</name>
        <dbReference type="ChEBI" id="CHEBI:57540"/>
    </ligand>
</feature>
<feature type="binding site" evidence="1">
    <location>
        <begin position="124"/>
        <end position="127"/>
    </location>
    <ligand>
        <name>NAD(+)</name>
        <dbReference type="ChEBI" id="CHEBI:57540"/>
    </ligand>
</feature>
<feature type="binding site" evidence="1">
    <location>
        <position position="158"/>
    </location>
    <ligand>
        <name>(S)-2,3,4,5-tetrahydrodipicolinate</name>
        <dbReference type="ChEBI" id="CHEBI:16845"/>
    </ligand>
</feature>
<feature type="binding site" evidence="1">
    <location>
        <begin position="167"/>
        <end position="168"/>
    </location>
    <ligand>
        <name>(S)-2,3,4,5-tetrahydrodipicolinate</name>
        <dbReference type="ChEBI" id="CHEBI:16845"/>
    </ligand>
</feature>
<evidence type="ECO:0000255" key="1">
    <source>
        <dbReference type="HAMAP-Rule" id="MF_00102"/>
    </source>
</evidence>
<evidence type="ECO:0000305" key="2"/>
<accession>B7GV10</accession>
<reference key="1">
    <citation type="journal article" date="2008" name="J. Bacteriol.">
        <title>Comparative genome sequence analysis of multidrug-resistant Acinetobacter baumannii.</title>
        <authorList>
            <person name="Adams M.D."/>
            <person name="Goglin K."/>
            <person name="Molyneaux N."/>
            <person name="Hujer K.M."/>
            <person name="Lavender H."/>
            <person name="Jamison J.J."/>
            <person name="MacDonald I.J."/>
            <person name="Martin K.M."/>
            <person name="Russo T."/>
            <person name="Campagnari A.A."/>
            <person name="Hujer A.M."/>
            <person name="Bonomo R.A."/>
            <person name="Gill S.R."/>
        </authorList>
    </citation>
    <scope>NUCLEOTIDE SEQUENCE [LARGE SCALE GENOMIC DNA]</scope>
    <source>
        <strain>AB307-0294</strain>
    </source>
</reference>
<dbReference type="EC" id="1.17.1.8" evidence="1"/>
<dbReference type="EMBL" id="CP001172">
    <property type="protein sequence ID" value="ACJ57507.1"/>
    <property type="molecule type" value="Genomic_DNA"/>
</dbReference>
<dbReference type="RefSeq" id="WP_001271382.1">
    <property type="nucleotide sequence ID" value="NZ_CP001172.1"/>
</dbReference>
<dbReference type="SMR" id="B7GV10"/>
<dbReference type="HOGENOM" id="CLU_047479_2_1_6"/>
<dbReference type="UniPathway" id="UPA00034">
    <property type="reaction ID" value="UER00018"/>
</dbReference>
<dbReference type="Proteomes" id="UP000006924">
    <property type="component" value="Chromosome"/>
</dbReference>
<dbReference type="GO" id="GO:0005829">
    <property type="term" value="C:cytosol"/>
    <property type="evidence" value="ECO:0007669"/>
    <property type="project" value="TreeGrafter"/>
</dbReference>
<dbReference type="GO" id="GO:0008839">
    <property type="term" value="F:4-hydroxy-tetrahydrodipicolinate reductase"/>
    <property type="evidence" value="ECO:0007669"/>
    <property type="project" value="UniProtKB-EC"/>
</dbReference>
<dbReference type="GO" id="GO:0051287">
    <property type="term" value="F:NAD binding"/>
    <property type="evidence" value="ECO:0007669"/>
    <property type="project" value="UniProtKB-UniRule"/>
</dbReference>
<dbReference type="GO" id="GO:0050661">
    <property type="term" value="F:NADP binding"/>
    <property type="evidence" value="ECO:0007669"/>
    <property type="project" value="UniProtKB-UniRule"/>
</dbReference>
<dbReference type="GO" id="GO:0016726">
    <property type="term" value="F:oxidoreductase activity, acting on CH or CH2 groups, NAD or NADP as acceptor"/>
    <property type="evidence" value="ECO:0007669"/>
    <property type="project" value="UniProtKB-UniRule"/>
</dbReference>
<dbReference type="GO" id="GO:0019877">
    <property type="term" value="P:diaminopimelate biosynthetic process"/>
    <property type="evidence" value="ECO:0007669"/>
    <property type="project" value="UniProtKB-UniRule"/>
</dbReference>
<dbReference type="GO" id="GO:0009089">
    <property type="term" value="P:lysine biosynthetic process via diaminopimelate"/>
    <property type="evidence" value="ECO:0007669"/>
    <property type="project" value="UniProtKB-UniRule"/>
</dbReference>
<dbReference type="CDD" id="cd02274">
    <property type="entry name" value="DHDPR_N"/>
    <property type="match status" value="1"/>
</dbReference>
<dbReference type="FunFam" id="3.30.360.10:FF:000004">
    <property type="entry name" value="4-hydroxy-tetrahydrodipicolinate reductase"/>
    <property type="match status" value="1"/>
</dbReference>
<dbReference type="FunFam" id="3.40.50.720:FF:000048">
    <property type="entry name" value="4-hydroxy-tetrahydrodipicolinate reductase"/>
    <property type="match status" value="1"/>
</dbReference>
<dbReference type="Gene3D" id="3.30.360.10">
    <property type="entry name" value="Dihydrodipicolinate Reductase, domain 2"/>
    <property type="match status" value="1"/>
</dbReference>
<dbReference type="Gene3D" id="3.40.50.720">
    <property type="entry name" value="NAD(P)-binding Rossmann-like Domain"/>
    <property type="match status" value="1"/>
</dbReference>
<dbReference type="HAMAP" id="MF_00102">
    <property type="entry name" value="DapB"/>
    <property type="match status" value="1"/>
</dbReference>
<dbReference type="InterPro" id="IPR022663">
    <property type="entry name" value="DapB_C"/>
</dbReference>
<dbReference type="InterPro" id="IPR000846">
    <property type="entry name" value="DapB_N"/>
</dbReference>
<dbReference type="InterPro" id="IPR022664">
    <property type="entry name" value="DapB_N_CS"/>
</dbReference>
<dbReference type="InterPro" id="IPR023940">
    <property type="entry name" value="DHDPR_bac"/>
</dbReference>
<dbReference type="InterPro" id="IPR036291">
    <property type="entry name" value="NAD(P)-bd_dom_sf"/>
</dbReference>
<dbReference type="NCBIfam" id="TIGR00036">
    <property type="entry name" value="dapB"/>
    <property type="match status" value="1"/>
</dbReference>
<dbReference type="PANTHER" id="PTHR20836:SF0">
    <property type="entry name" value="4-HYDROXY-TETRAHYDRODIPICOLINATE REDUCTASE 1, CHLOROPLASTIC-RELATED"/>
    <property type="match status" value="1"/>
</dbReference>
<dbReference type="PANTHER" id="PTHR20836">
    <property type="entry name" value="DIHYDRODIPICOLINATE REDUCTASE"/>
    <property type="match status" value="1"/>
</dbReference>
<dbReference type="Pfam" id="PF05173">
    <property type="entry name" value="DapB_C"/>
    <property type="match status" value="1"/>
</dbReference>
<dbReference type="Pfam" id="PF01113">
    <property type="entry name" value="DapB_N"/>
    <property type="match status" value="1"/>
</dbReference>
<dbReference type="PIRSF" id="PIRSF000161">
    <property type="entry name" value="DHPR"/>
    <property type="match status" value="1"/>
</dbReference>
<dbReference type="SUPFAM" id="SSF55347">
    <property type="entry name" value="Glyceraldehyde-3-phosphate dehydrogenase-like, C-terminal domain"/>
    <property type="match status" value="1"/>
</dbReference>
<dbReference type="SUPFAM" id="SSF51735">
    <property type="entry name" value="NAD(P)-binding Rossmann-fold domains"/>
    <property type="match status" value="1"/>
</dbReference>
<dbReference type="PROSITE" id="PS01298">
    <property type="entry name" value="DAPB"/>
    <property type="match status" value="1"/>
</dbReference>
<organism>
    <name type="scientific">Acinetobacter baumannii (strain AB307-0294)</name>
    <dbReference type="NCBI Taxonomy" id="557600"/>
    <lineage>
        <taxon>Bacteria</taxon>
        <taxon>Pseudomonadati</taxon>
        <taxon>Pseudomonadota</taxon>
        <taxon>Gammaproteobacteria</taxon>
        <taxon>Moraxellales</taxon>
        <taxon>Moraxellaceae</taxon>
        <taxon>Acinetobacter</taxon>
        <taxon>Acinetobacter calcoaceticus/baumannii complex</taxon>
    </lineage>
</organism>
<name>DAPB_ACIB3</name>
<keyword id="KW-0028">Amino-acid biosynthesis</keyword>
<keyword id="KW-0963">Cytoplasm</keyword>
<keyword id="KW-0220">Diaminopimelate biosynthesis</keyword>
<keyword id="KW-0457">Lysine biosynthesis</keyword>
<keyword id="KW-0520">NAD</keyword>
<keyword id="KW-0521">NADP</keyword>
<keyword id="KW-0560">Oxidoreductase</keyword>